<sequence length="367" mass="39825">MASPCLIAVLVFLCAIVSCYSDNPIDSCWRGDSNWDQNRMKLADCAVGFGSSTMGGKGGDFYTVTSTDDNPVNPTPGTLRYGATREKALWIIFSQNMNIKLKMPLYVAGHKTIDGRGADVHLGNGGPCLFMRKVSHVILHSLHIHGCNTSVLGDVLVSESIGVEPVHAQDGDAITMRNVTNAWIDHNSLSDCSDGLIDVTLGSTGITISNNHFFNHHKVMLLGHDDTYDDDKSMKVTVAFNQFGPNAGQRMPRARYGLVHVANNNYDPWNIYAIGGSSNPTILSEGNSFTAPSESYKKEVTKRIGCESPSACANWVWRSTRDAFINGAYFVSSGKTEETNIYNSNEAFKVENGNAAPQLTKNAGVVT</sequence>
<protein>
    <recommendedName>
        <fullName>Pectate lyase 1</fullName>
        <ecNumber>4.2.2.2</ecNumber>
    </recommendedName>
    <alternativeName>
        <fullName evidence="10 11">Major pollen allergen Jun a 1</fullName>
    </alternativeName>
    <allergenName evidence="10 11 12 13 14">Jun a 1</allergenName>
</protein>
<keyword id="KW-0002">3D-structure</keyword>
<keyword id="KW-0020">Allergen</keyword>
<keyword id="KW-0106">Calcium</keyword>
<keyword id="KW-0903">Direct protein sequencing</keyword>
<keyword id="KW-1015">Disulfide bond</keyword>
<keyword id="KW-0325">Glycoprotein</keyword>
<keyword id="KW-0456">Lyase</keyword>
<keyword id="KW-0479">Metal-binding</keyword>
<keyword id="KW-0732">Signal</keyword>
<proteinExistence type="evidence at protein level"/>
<reference key="1">
    <citation type="journal article" date="1999" name="J. Allergy Clin. Immunol.">
        <title>Molecular cloning of the mountain cedar (Juniperus ashei) pollen major allergen, Jun a 1.</title>
        <authorList>
            <person name="Midoro-Horiuti T.M."/>
            <person name="Goldblum R.M."/>
            <person name="Kurosky A."/>
            <person name="Wood T.G."/>
            <person name="Brooks E.G."/>
        </authorList>
    </citation>
    <scope>NUCLEOTIDE SEQUENCE [MRNA]</scope>
    <scope>PROTEIN SEQUENCE OF 31-38; 42-50; 58-80; 88-94; 117-124; 134-140; 160-164; 256-263 AND 322-325</scope>
    <scope>TISSUE SPECIFICITY</scope>
    <scope>ALLERGEN</scope>
    <source>
        <tissue>Pollen</tissue>
    </source>
</reference>
<reference key="2">
    <citation type="journal article" date="1999" name="J. Allergy Clin. Immunol.">
        <title>Isolation and characterization of the mountain cedar (Juniperus ashei) pollen major allergen, Jun a 1.</title>
        <authorList>
            <person name="Midoro-Horiuti T."/>
            <person name="Goldblum R.M."/>
            <person name="Kurosky A."/>
            <person name="Goetz D.W."/>
            <person name="Brooks E.G."/>
        </authorList>
    </citation>
    <scope>PROTEIN SEQUENCE OF 22-50</scope>
    <scope>TISSUE SPECIFICITY</scope>
    <scope>ALLERGEN</scope>
    <source>
        <tissue>Pollen</tissue>
    </source>
</reference>
<reference key="3">
    <citation type="journal article" date="2003" name="Mol. Immunol.">
        <title>Major linear IgE epitopes of mountain cedar pollen allergen Jun a 1 map to the pectate lyase catalytic site.</title>
        <authorList>
            <person name="Midoro-Horiuti T."/>
            <person name="Mathura V."/>
            <person name="Schein C.H."/>
            <person name="Braun W."/>
            <person name="Yu S."/>
            <person name="Watanabe M."/>
            <person name="Lee J.C."/>
            <person name="Brooks E.G."/>
            <person name="Goldblum R.M."/>
        </authorList>
    </citation>
    <scope>TISSUE SPECIFICITY</scope>
    <scope>ALLERGEN</scope>
    <scope>REGIONS</scope>
    <scope>3D-STRUCTURE MODELING</scope>
</reference>
<reference key="4">
    <citation type="journal article" date="2005" name="Biosci. Biotechnol. Biochem.">
        <title>Occurrence of Lewis a epitope in N-glycans of a glycoallergen, Jun a 1, from mountain cedar (Juniperus ashei) pollen.</title>
        <authorList>
            <person name="Kimura Y."/>
            <person name="Kamamoto M."/>
            <person name="Maeda M."/>
            <person name="Okano M."/>
            <person name="Yokoyama M."/>
            <person name="Kino K."/>
        </authorList>
    </citation>
    <scope>GLYCOSYLATION</scope>
</reference>
<reference key="5">
    <citation type="journal article" date="2007" name="Mol. Immunol.">
        <title>Major mountain cedar allergen, Jun a 1, contains conformational as well as linear IgE epitopes.</title>
        <authorList>
            <person name="Varshney S."/>
            <person name="Goldblum R.M."/>
            <person name="Kearney C."/>
            <person name="Watanabe M."/>
            <person name="Midoro-Horiuti T."/>
        </authorList>
    </citation>
    <scope>TISSUE SPECIFICITY</scope>
    <scope>ALLERGEN</scope>
    <scope>CIRCULAR DICHROISM ANALYSIS</scope>
</reference>
<reference key="6">
    <citation type="journal article" date="2010" name="Int. Arch. Allergy Immunol.">
        <title>Plant-expressed recombinant mountain cedar allergen Jun a 1 is allergenic and has limited pectate lyase activity.</title>
        <authorList>
            <person name="Liu Z."/>
            <person name="Bhattacharyya S."/>
            <person name="Ning B."/>
            <person name="Midoro-Horiuti T."/>
            <person name="Czerwinski E.W."/>
            <person name="Goldblum R.M."/>
            <person name="Mort A."/>
            <person name="Kearney C.M."/>
        </authorList>
    </citation>
    <scope>FUNCTION AS A PECTATE LYASE</scope>
    <scope>CATALYTIC ACTIVITY</scope>
    <scope>IGE-BINDING</scope>
    <scope>MUTAGENESIS OF HIS-224</scope>
</reference>
<reference key="7">
    <citation type="journal article" date="2005" name="J. Biol. Chem.">
        <title>Crystal structure of Jun a 1, the major cedar pollen allergen from Juniperus ashei, reveals a parallel beta-helical core.</title>
        <authorList>
            <person name="Czerwinski E.W."/>
            <person name="Midoro-Horiuti T."/>
            <person name="White M.A."/>
            <person name="Brooks E.G."/>
            <person name="Goldblum R.M."/>
        </authorList>
    </citation>
    <scope>X-RAY CRYSTALLOGRAPHY (1.7 ANGSTROMS) OF 22-367</scope>
    <scope>DISULFIDE BONDS</scope>
</reference>
<comment type="function">
    <text evidence="9">Has low pectate lyase activity.</text>
</comment>
<comment type="catalytic activity">
    <reaction evidence="9">
        <text>Eliminative cleavage of (1-&gt;4)-alpha-D-galacturonan to give oligosaccharides with 4-deoxy-alpha-D-galact-4-enuronosyl groups at their non-reducing ends.</text>
        <dbReference type="EC" id="4.2.2.2"/>
    </reaction>
</comment>
<comment type="cofactor">
    <cofactor evidence="1">
        <name>Ca(2+)</name>
        <dbReference type="ChEBI" id="CHEBI:29108"/>
    </cofactor>
    <text evidence="1">Binds 1 Ca(2+) ion.</text>
</comment>
<comment type="pathway">
    <text>Glycan metabolism; pectin degradation; 2-dehydro-3-deoxy-D-gluconate from pectin: step 2/5.</text>
</comment>
<comment type="tissue specificity">
    <text evidence="3 4 5 8">Expressed in pollen (at protein level).</text>
</comment>
<comment type="PTM">
    <text evidence="7">N-glycosylated; consists of complex-type N-glycans containing the Lewis a antigen (Galbeta1-3(Fucalpha1-4)GlcNAcbeta1-).</text>
</comment>
<comment type="allergen">
    <text evidence="3 4 5 8">Causes an allergic reaction in human. Binds to IgE of patients allergic to mountain cedar (PubMed:10482835, PubMed:10482836, PubMed:14563374, PubMed:16423400). Binds to IgE in 71% of the 14 patients tested allergic to mountain cedar. Binds to IgE in 40% of the 35 patients tested allergic to Japanese cedar (PubMed:10482835). IgE-binding is significantly reduced by heat denaturation (75 degrees Celsius), chemical denaturation (guanidine treatment) and reductive alkylation in guanidine, but not by reductive alkylation alone, indicating the presence of conformational epitopes. On the other hand, heat and guanidine-induced denaturation increases binding to a mouse monoclonal antibody KW-S91, indicative of enhanced display of the linear epitope by these treatments (PubMed:16423400). Causes proliferation of the peripheral blood mononuclear cells (PBMCs) in patients allergic to mountain cedar (PubMed:10482835). Causes seasonal allergic rhinitis in North America (PubMed:10482835, PubMed:10482836, PubMed:14563374, PubMed:16423400).</text>
</comment>
<comment type="similarity">
    <text evidence="15">Belongs to the polysaccharide lyase 1 family. Amb a subfamily.</text>
</comment>
<accession>P81294</accession>
<accession>Q9ZNU7</accession>
<organism>
    <name type="scientific">Juniperus ashei</name>
    <name type="common">Ozark white cedar</name>
    <dbReference type="NCBI Taxonomy" id="13101"/>
    <lineage>
        <taxon>Eukaryota</taxon>
        <taxon>Viridiplantae</taxon>
        <taxon>Streptophyta</taxon>
        <taxon>Embryophyta</taxon>
        <taxon>Tracheophyta</taxon>
        <taxon>Spermatophyta</taxon>
        <taxon>Pinopsida</taxon>
        <taxon>Pinidae</taxon>
        <taxon>Conifers II</taxon>
        <taxon>Cupressales</taxon>
        <taxon>Cupressaceae</taxon>
        <taxon>Juniperus</taxon>
    </lineage>
</organism>
<dbReference type="EC" id="4.2.2.2"/>
<dbReference type="EMBL" id="AF106663">
    <property type="protein sequence ID" value="AAD03609.1"/>
    <property type="molecule type" value="mRNA"/>
</dbReference>
<dbReference type="EMBL" id="AF106662">
    <property type="protein sequence ID" value="AAD03608.1"/>
    <property type="molecule type" value="mRNA"/>
</dbReference>
<dbReference type="PDB" id="1PXZ">
    <property type="method" value="X-ray"/>
    <property type="resolution" value="1.70 A"/>
    <property type="chains" value="A/B=22-367"/>
</dbReference>
<dbReference type="PDBsum" id="1PXZ"/>
<dbReference type="SMR" id="P81294"/>
<dbReference type="Allergome" id="3337">
    <property type="allergen name" value="Jun a 1.0101"/>
</dbReference>
<dbReference type="Allergome" id="3338">
    <property type="allergen name" value="Jun a 1.0102"/>
</dbReference>
<dbReference type="Allergome" id="427">
    <property type="allergen name" value="Jun a 1"/>
</dbReference>
<dbReference type="CAZy" id="PL1">
    <property type="family name" value="Polysaccharide Lyase Family 1"/>
</dbReference>
<dbReference type="UniPathway" id="UPA00545">
    <property type="reaction ID" value="UER00824"/>
</dbReference>
<dbReference type="EvolutionaryTrace" id="P81294"/>
<dbReference type="GO" id="GO:0046872">
    <property type="term" value="F:metal ion binding"/>
    <property type="evidence" value="ECO:0007669"/>
    <property type="project" value="UniProtKB-KW"/>
</dbReference>
<dbReference type="GO" id="GO:0030570">
    <property type="term" value="F:pectate lyase activity"/>
    <property type="evidence" value="ECO:0000314"/>
    <property type="project" value="UniProtKB"/>
</dbReference>
<dbReference type="GO" id="GO:0045490">
    <property type="term" value="P:pectin catabolic process"/>
    <property type="evidence" value="ECO:0000314"/>
    <property type="project" value="UniProtKB"/>
</dbReference>
<dbReference type="Gene3D" id="2.160.20.10">
    <property type="entry name" value="Single-stranded right-handed beta-helix, Pectin lyase-like"/>
    <property type="match status" value="1"/>
</dbReference>
<dbReference type="InterPro" id="IPR018082">
    <property type="entry name" value="AmbAllergen"/>
</dbReference>
<dbReference type="InterPro" id="IPR002022">
    <property type="entry name" value="Pec_lyase"/>
</dbReference>
<dbReference type="InterPro" id="IPR012334">
    <property type="entry name" value="Pectin_lyas_fold"/>
</dbReference>
<dbReference type="InterPro" id="IPR011050">
    <property type="entry name" value="Pectin_lyase_fold/virulence"/>
</dbReference>
<dbReference type="InterPro" id="IPR045032">
    <property type="entry name" value="PEL"/>
</dbReference>
<dbReference type="PANTHER" id="PTHR31683:SF80">
    <property type="entry name" value="PECTATE LYASE 16-RELATED"/>
    <property type="match status" value="1"/>
</dbReference>
<dbReference type="PANTHER" id="PTHR31683">
    <property type="entry name" value="PECTATE LYASE 18-RELATED"/>
    <property type="match status" value="1"/>
</dbReference>
<dbReference type="Pfam" id="PF00544">
    <property type="entry name" value="Pectate_lyase_4"/>
    <property type="match status" value="1"/>
</dbReference>
<dbReference type="PRINTS" id="PR00807">
    <property type="entry name" value="AMBALLERGEN"/>
</dbReference>
<dbReference type="SMART" id="SM00656">
    <property type="entry name" value="Amb_all"/>
    <property type="match status" value="1"/>
</dbReference>
<dbReference type="SUPFAM" id="SSF51126">
    <property type="entry name" value="Pectin lyase-like"/>
    <property type="match status" value="1"/>
</dbReference>
<name>PLY1_JUNAS</name>
<feature type="signal peptide" evidence="3">
    <location>
        <begin position="1"/>
        <end position="21"/>
    </location>
</feature>
<feature type="chain" id="PRO_0000024908" description="Pectate lyase 1">
    <location>
        <begin position="22"/>
        <end position="367"/>
    </location>
</feature>
<feature type="region of interest" description="Beta-helix">
    <location>
        <begin position="38"/>
        <end position="305"/>
    </location>
</feature>
<feature type="region of interest" description="IgE-binding. Binds to IgE in 5 out of 7 patients tested" evidence="5">
    <location>
        <begin position="92"/>
        <end position="104"/>
    </location>
</feature>
<feature type="region of interest" description="IgE-binding. Binds to IgE in 6 out of 7 patients tested" evidence="5">
    <location>
        <begin position="239"/>
        <end position="250"/>
    </location>
</feature>
<feature type="region of interest" description="IgE-binding. Binds to IgE in 5 out of 7 patients tested" evidence="5">
    <location>
        <begin position="251"/>
        <end position="258"/>
    </location>
</feature>
<feature type="region of interest" description="IgE-binding. Binds to IgE in 3 out of 7 patients tested" evidence="5">
    <location>
        <begin position="317"/>
        <end position="327"/>
    </location>
</feature>
<feature type="active site" evidence="2">
    <location>
        <position position="250"/>
    </location>
</feature>
<feature type="binding site" evidence="1">
    <location>
        <position position="170"/>
    </location>
    <ligand>
        <name>Ca(2+)</name>
        <dbReference type="ChEBI" id="CHEBI:29108"/>
    </ligand>
</feature>
<feature type="binding site" evidence="1">
    <location>
        <position position="194"/>
    </location>
    <ligand>
        <name>Ca(2+)</name>
        <dbReference type="ChEBI" id="CHEBI:29108"/>
    </ligand>
</feature>
<feature type="binding site" evidence="1">
    <location>
        <position position="198"/>
    </location>
    <ligand>
        <name>Ca(2+)</name>
        <dbReference type="ChEBI" id="CHEBI:29108"/>
    </ligand>
</feature>
<feature type="glycosylation site" description="N-linked (GlcNAc...) asparagine" evidence="2">
    <location>
        <position position="148"/>
    </location>
</feature>
<feature type="glycosylation site" description="N-linked (GlcNAc...) asparagine" evidence="2">
    <location>
        <position position="178"/>
    </location>
</feature>
<feature type="disulfide bond" evidence="6">
    <location>
        <begin position="28"/>
        <end position="45"/>
    </location>
</feature>
<feature type="disulfide bond" evidence="6">
    <location>
        <begin position="128"/>
        <end position="147"/>
    </location>
</feature>
<feature type="disulfide bond" evidence="6">
    <location>
        <begin position="306"/>
        <end position="312"/>
    </location>
</feature>
<feature type="mutagenesis site" description="Reduced pectate lyase activity." evidence="9">
    <original>H</original>
    <variation>A</variation>
    <location>
        <position position="224"/>
    </location>
</feature>
<feature type="helix" evidence="16">
    <location>
        <begin position="26"/>
        <end position="30"/>
    </location>
</feature>
<feature type="turn" evidence="16">
    <location>
        <begin position="35"/>
        <end position="37"/>
    </location>
</feature>
<feature type="helix" evidence="16">
    <location>
        <begin position="39"/>
        <end position="44"/>
    </location>
</feature>
<feature type="helix" evidence="16">
    <location>
        <begin position="48"/>
        <end position="50"/>
    </location>
</feature>
<feature type="turn" evidence="16">
    <location>
        <begin position="55"/>
        <end position="58"/>
    </location>
</feature>
<feature type="strand" evidence="16">
    <location>
        <begin position="59"/>
        <end position="64"/>
    </location>
</feature>
<feature type="helix" evidence="16">
    <location>
        <begin position="79"/>
        <end position="84"/>
    </location>
</feature>
<feature type="strand" evidence="16">
    <location>
        <begin position="89"/>
        <end position="95"/>
    </location>
</feature>
<feature type="strand" evidence="16">
    <location>
        <begin position="97"/>
        <end position="99"/>
    </location>
</feature>
<feature type="strand" evidence="16">
    <location>
        <begin position="109"/>
        <end position="114"/>
    </location>
</feature>
<feature type="strand" evidence="16">
    <location>
        <begin position="120"/>
        <end position="123"/>
    </location>
</feature>
<feature type="strand" evidence="16">
    <location>
        <begin position="129"/>
        <end position="133"/>
    </location>
</feature>
<feature type="strand" evidence="16">
    <location>
        <begin position="135"/>
        <end position="141"/>
    </location>
</feature>
<feature type="strand" evidence="16">
    <location>
        <begin position="143"/>
        <end position="145"/>
    </location>
</feature>
<feature type="strand" evidence="16">
    <location>
        <begin position="152"/>
        <end position="158"/>
    </location>
</feature>
<feature type="turn" evidence="16">
    <location>
        <begin position="159"/>
        <end position="161"/>
    </location>
</feature>
<feature type="strand" evidence="16">
    <location>
        <begin position="162"/>
        <end position="166"/>
    </location>
</feature>
<feature type="strand" evidence="16">
    <location>
        <begin position="173"/>
        <end position="178"/>
    </location>
</feature>
<feature type="strand" evidence="16">
    <location>
        <begin position="180"/>
        <end position="186"/>
    </location>
</feature>
<feature type="strand" evidence="16">
    <location>
        <begin position="188"/>
        <end position="190"/>
    </location>
</feature>
<feature type="strand" evidence="16">
    <location>
        <begin position="193"/>
        <end position="202"/>
    </location>
</feature>
<feature type="strand" evidence="16">
    <location>
        <begin position="204"/>
        <end position="210"/>
    </location>
</feature>
<feature type="strand" evidence="16">
    <location>
        <begin position="212"/>
        <end position="223"/>
    </location>
</feature>
<feature type="helix" evidence="16">
    <location>
        <begin position="229"/>
        <end position="233"/>
    </location>
</feature>
<feature type="strand" evidence="16">
    <location>
        <begin position="235"/>
        <end position="240"/>
    </location>
</feature>
<feature type="strand" evidence="16">
    <location>
        <begin position="245"/>
        <end position="249"/>
    </location>
</feature>
<feature type="strand" evidence="16">
    <location>
        <begin position="253"/>
        <end position="263"/>
    </location>
</feature>
<feature type="strand" evidence="16">
    <location>
        <begin position="273"/>
        <end position="278"/>
    </location>
</feature>
<feature type="strand" evidence="16">
    <location>
        <begin position="281"/>
        <end position="286"/>
    </location>
</feature>
<feature type="strand" evidence="16">
    <location>
        <begin position="288"/>
        <end position="290"/>
    </location>
</feature>
<feature type="helix" evidence="16">
    <location>
        <begin position="295"/>
        <end position="297"/>
    </location>
</feature>
<feature type="strand" evidence="16">
    <location>
        <begin position="299"/>
        <end position="303"/>
    </location>
</feature>
<feature type="helix" evidence="16">
    <location>
        <begin position="309"/>
        <end position="312"/>
    </location>
</feature>
<feature type="strand" evidence="16">
    <location>
        <begin position="317"/>
        <end position="321"/>
    </location>
</feature>
<feature type="strand" evidence="16">
    <location>
        <begin position="323"/>
        <end position="325"/>
    </location>
</feature>
<feature type="turn" evidence="16">
    <location>
        <begin position="344"/>
        <end position="346"/>
    </location>
</feature>
<feature type="helix" evidence="16">
    <location>
        <begin position="353"/>
        <end position="355"/>
    </location>
</feature>
<feature type="helix" evidence="16">
    <location>
        <begin position="356"/>
        <end position="359"/>
    </location>
</feature>
<feature type="turn" evidence="16">
    <location>
        <begin position="360"/>
        <end position="362"/>
    </location>
</feature>
<evidence type="ECO:0000250" key="1"/>
<evidence type="ECO:0000255" key="2"/>
<evidence type="ECO:0000269" key="3">
    <source>
    </source>
</evidence>
<evidence type="ECO:0000269" key="4">
    <source>
    </source>
</evidence>
<evidence type="ECO:0000269" key="5">
    <source>
    </source>
</evidence>
<evidence type="ECO:0000269" key="6">
    <source>
    </source>
</evidence>
<evidence type="ECO:0000269" key="7">
    <source>
    </source>
</evidence>
<evidence type="ECO:0000269" key="8">
    <source>
    </source>
</evidence>
<evidence type="ECO:0000269" key="9">
    <source>
    </source>
</evidence>
<evidence type="ECO:0000303" key="10">
    <source>
    </source>
</evidence>
<evidence type="ECO:0000303" key="11">
    <source>
    </source>
</evidence>
<evidence type="ECO:0000303" key="12">
    <source>
    </source>
</evidence>
<evidence type="ECO:0000303" key="13">
    <source>
    </source>
</evidence>
<evidence type="ECO:0000303" key="14">
    <source>
    </source>
</evidence>
<evidence type="ECO:0000305" key="15"/>
<evidence type="ECO:0007829" key="16">
    <source>
        <dbReference type="PDB" id="1PXZ"/>
    </source>
</evidence>